<organism>
    <name type="scientific">Methylocella silvestris (strain DSM 15510 / CIP 108128 / LMG 27833 / NCIMB 13906 / BL2)</name>
    <dbReference type="NCBI Taxonomy" id="395965"/>
    <lineage>
        <taxon>Bacteria</taxon>
        <taxon>Pseudomonadati</taxon>
        <taxon>Pseudomonadota</taxon>
        <taxon>Alphaproteobacteria</taxon>
        <taxon>Hyphomicrobiales</taxon>
        <taxon>Beijerinckiaceae</taxon>
        <taxon>Methylocella</taxon>
    </lineage>
</organism>
<keyword id="KW-0004">4Fe-4S</keyword>
<keyword id="KW-0067">ATP-binding</keyword>
<keyword id="KW-0077">Bacteriochlorophyll biosynthesis</keyword>
<keyword id="KW-0149">Chlorophyll biosynthesis</keyword>
<keyword id="KW-0408">Iron</keyword>
<keyword id="KW-0411">Iron-sulfur</keyword>
<keyword id="KW-0460">Magnesium</keyword>
<keyword id="KW-0479">Metal-binding</keyword>
<keyword id="KW-0547">Nucleotide-binding</keyword>
<keyword id="KW-0560">Oxidoreductase</keyword>
<keyword id="KW-0602">Photosynthesis</keyword>
<keyword id="KW-1185">Reference proteome</keyword>
<accession>B8EPX5</accession>
<dbReference type="EC" id="1.3.7.7" evidence="1"/>
<dbReference type="EMBL" id="CP001280">
    <property type="protein sequence ID" value="ACK50979.1"/>
    <property type="molecule type" value="Genomic_DNA"/>
</dbReference>
<dbReference type="RefSeq" id="WP_012591049.1">
    <property type="nucleotide sequence ID" value="NC_011666.1"/>
</dbReference>
<dbReference type="SMR" id="B8EPX5"/>
<dbReference type="STRING" id="395965.Msil_2039"/>
<dbReference type="KEGG" id="msl:Msil_2039"/>
<dbReference type="eggNOG" id="COG1348">
    <property type="taxonomic scope" value="Bacteria"/>
</dbReference>
<dbReference type="HOGENOM" id="CLU_059373_2_0_5"/>
<dbReference type="OrthoDB" id="9778641at2"/>
<dbReference type="UniPathway" id="UPA00671"/>
<dbReference type="Proteomes" id="UP000002257">
    <property type="component" value="Chromosome"/>
</dbReference>
<dbReference type="GO" id="GO:0051539">
    <property type="term" value="F:4 iron, 4 sulfur cluster binding"/>
    <property type="evidence" value="ECO:0007669"/>
    <property type="project" value="UniProtKB-UniRule"/>
</dbReference>
<dbReference type="GO" id="GO:0005524">
    <property type="term" value="F:ATP binding"/>
    <property type="evidence" value="ECO:0007669"/>
    <property type="project" value="UniProtKB-UniRule"/>
</dbReference>
<dbReference type="GO" id="GO:0046872">
    <property type="term" value="F:metal ion binding"/>
    <property type="evidence" value="ECO:0007669"/>
    <property type="project" value="UniProtKB-KW"/>
</dbReference>
<dbReference type="GO" id="GO:0016730">
    <property type="term" value="F:oxidoreductase activity, acting on iron-sulfur proteins as donors"/>
    <property type="evidence" value="ECO:0007669"/>
    <property type="project" value="InterPro"/>
</dbReference>
<dbReference type="GO" id="GO:0016636">
    <property type="term" value="F:oxidoreductase activity, acting on the CH-CH group of donors, iron-sulfur protein as acceptor"/>
    <property type="evidence" value="ECO:0007669"/>
    <property type="project" value="UniProtKB-UniRule"/>
</dbReference>
<dbReference type="GO" id="GO:0036070">
    <property type="term" value="P:light-independent bacteriochlorophyll biosynthetic process"/>
    <property type="evidence" value="ECO:0007669"/>
    <property type="project" value="UniProtKB-UniRule"/>
</dbReference>
<dbReference type="GO" id="GO:0019685">
    <property type="term" value="P:photosynthesis, dark reaction"/>
    <property type="evidence" value="ECO:0007669"/>
    <property type="project" value="InterPro"/>
</dbReference>
<dbReference type="Gene3D" id="3.40.50.300">
    <property type="entry name" value="P-loop containing nucleotide triphosphate hydrolases"/>
    <property type="match status" value="1"/>
</dbReference>
<dbReference type="HAMAP" id="MF_00355">
    <property type="entry name" value="ChlL_BchL"/>
    <property type="match status" value="1"/>
</dbReference>
<dbReference type="InterPro" id="IPR030655">
    <property type="entry name" value="NifH/chlL_CS"/>
</dbReference>
<dbReference type="InterPro" id="IPR000392">
    <property type="entry name" value="NifH/frxC"/>
</dbReference>
<dbReference type="InterPro" id="IPR027417">
    <property type="entry name" value="P-loop_NTPase"/>
</dbReference>
<dbReference type="InterPro" id="IPR005971">
    <property type="entry name" value="Protochlorophyllide_ATP-bd"/>
</dbReference>
<dbReference type="NCBIfam" id="TIGR01281">
    <property type="entry name" value="DPOR_bchL"/>
    <property type="match status" value="1"/>
</dbReference>
<dbReference type="PANTHER" id="PTHR42864">
    <property type="entry name" value="LIGHT-INDEPENDENT PROTOCHLOROPHYLLIDE REDUCTASE IRON-SULFUR ATP-BINDING PROTEIN"/>
    <property type="match status" value="1"/>
</dbReference>
<dbReference type="PANTHER" id="PTHR42864:SF2">
    <property type="entry name" value="LIGHT-INDEPENDENT PROTOCHLOROPHYLLIDE REDUCTASE IRON-SULFUR ATP-BINDING PROTEIN"/>
    <property type="match status" value="1"/>
</dbReference>
<dbReference type="Pfam" id="PF00142">
    <property type="entry name" value="Fer4_NifH"/>
    <property type="match status" value="1"/>
</dbReference>
<dbReference type="PRINTS" id="PR00091">
    <property type="entry name" value="NITROGNASEII"/>
</dbReference>
<dbReference type="SUPFAM" id="SSF52540">
    <property type="entry name" value="P-loop containing nucleoside triphosphate hydrolases"/>
    <property type="match status" value="1"/>
</dbReference>
<dbReference type="PROSITE" id="PS00746">
    <property type="entry name" value="NIFH_FRXC_1"/>
    <property type="match status" value="1"/>
</dbReference>
<dbReference type="PROSITE" id="PS00692">
    <property type="entry name" value="NIFH_FRXC_2"/>
    <property type="match status" value="1"/>
</dbReference>
<dbReference type="PROSITE" id="PS51026">
    <property type="entry name" value="NIFH_FRXC_3"/>
    <property type="match status" value="1"/>
</dbReference>
<evidence type="ECO:0000255" key="1">
    <source>
        <dbReference type="HAMAP-Rule" id="MF_00355"/>
    </source>
</evidence>
<feature type="chain" id="PRO_1000133443" description="Light-independent protochlorophyllide reductase iron-sulfur ATP-binding protein">
    <location>
        <begin position="1"/>
        <end position="302"/>
    </location>
</feature>
<feature type="binding site" evidence="1">
    <location>
        <begin position="46"/>
        <end position="51"/>
    </location>
    <ligand>
        <name>ATP</name>
        <dbReference type="ChEBI" id="CHEBI:30616"/>
    </ligand>
</feature>
<feature type="binding site" evidence="1">
    <location>
        <position position="50"/>
    </location>
    <ligand>
        <name>Mg(2+)</name>
        <dbReference type="ChEBI" id="CHEBI:18420"/>
    </ligand>
</feature>
<feature type="binding site" evidence="1">
    <location>
        <position position="75"/>
    </location>
    <ligand>
        <name>ATP</name>
        <dbReference type="ChEBI" id="CHEBI:30616"/>
    </ligand>
</feature>
<feature type="binding site" evidence="1">
    <location>
        <position position="131"/>
    </location>
    <ligand>
        <name>[4Fe-4S] cluster</name>
        <dbReference type="ChEBI" id="CHEBI:49883"/>
        <note>ligand shared between dimeric partners</note>
    </ligand>
</feature>
<feature type="binding site" evidence="1">
    <location>
        <position position="165"/>
    </location>
    <ligand>
        <name>[4Fe-4S] cluster</name>
        <dbReference type="ChEBI" id="CHEBI:49883"/>
        <note>ligand shared between dimeric partners</note>
    </ligand>
</feature>
<feature type="binding site" evidence="1">
    <location>
        <begin position="216"/>
        <end position="217"/>
    </location>
    <ligand>
        <name>ATP</name>
        <dbReference type="ChEBI" id="CHEBI:30616"/>
    </ligand>
</feature>
<reference key="1">
    <citation type="journal article" date="2010" name="J. Bacteriol.">
        <title>Complete genome sequence of the aerobic facultative methanotroph Methylocella silvestris BL2.</title>
        <authorList>
            <person name="Chen Y."/>
            <person name="Crombie A."/>
            <person name="Rahman M.T."/>
            <person name="Dedysh S.N."/>
            <person name="Liesack W."/>
            <person name="Stott M.B."/>
            <person name="Alam M."/>
            <person name="Theisen A.R."/>
            <person name="Murrell J.C."/>
            <person name="Dunfield P.F."/>
        </authorList>
    </citation>
    <scope>NUCLEOTIDE SEQUENCE [LARGE SCALE GENOMIC DNA]</scope>
    <source>
        <strain>DSM 15510 / CIP 108128 / LMG 27833 / NCIMB 13906 / BL2</strain>
    </source>
</reference>
<name>BCHL_METSB</name>
<protein>
    <recommendedName>
        <fullName evidence="1">Light-independent protochlorophyllide reductase iron-sulfur ATP-binding protein</fullName>
        <shortName evidence="1">DPOR subunit L</shortName>
        <shortName evidence="1">LI-POR subunit L</shortName>
        <ecNumber evidence="1">1.3.7.7</ecNumber>
    </recommendedName>
</protein>
<comment type="function">
    <text evidence="1">Component of the dark-operative protochlorophyllide reductase (DPOR) that uses Mg-ATP and reduced ferredoxin to reduce ring D of protochlorophyllide (Pchlide) to form chlorophyllide a (Chlide). This reaction is light-independent. The L component serves as a unique electron donor to the NB-component of the complex, and binds Mg-ATP.</text>
</comment>
<comment type="catalytic activity">
    <reaction evidence="1">
        <text>chlorophyllide a + oxidized 2[4Fe-4S]-[ferredoxin] + 2 ADP + 2 phosphate = protochlorophyllide a + reduced 2[4Fe-4S]-[ferredoxin] + 2 ATP + 2 H2O</text>
        <dbReference type="Rhea" id="RHEA:28202"/>
        <dbReference type="Rhea" id="RHEA-COMP:10002"/>
        <dbReference type="Rhea" id="RHEA-COMP:10004"/>
        <dbReference type="ChEBI" id="CHEBI:15377"/>
        <dbReference type="ChEBI" id="CHEBI:30616"/>
        <dbReference type="ChEBI" id="CHEBI:33722"/>
        <dbReference type="ChEBI" id="CHEBI:33723"/>
        <dbReference type="ChEBI" id="CHEBI:43474"/>
        <dbReference type="ChEBI" id="CHEBI:83348"/>
        <dbReference type="ChEBI" id="CHEBI:83350"/>
        <dbReference type="ChEBI" id="CHEBI:456216"/>
        <dbReference type="EC" id="1.3.7.7"/>
    </reaction>
</comment>
<comment type="cofactor">
    <cofactor evidence="1">
        <name>[4Fe-4S] cluster</name>
        <dbReference type="ChEBI" id="CHEBI:49883"/>
    </cofactor>
    <text evidence="1">Binds 1 [4Fe-4S] cluster per dimer.</text>
</comment>
<comment type="pathway">
    <text evidence="1">Porphyrin-containing compound metabolism; bacteriochlorophyll biosynthesis (light-independent).</text>
</comment>
<comment type="subunit">
    <text evidence="1">Homodimer. Protochlorophyllide reductase is composed of three subunits; BchL, BchN and BchB.</text>
</comment>
<comment type="similarity">
    <text evidence="1">Belongs to the NifH/BchL/ChlL family.</text>
</comment>
<sequence length="302" mass="32461">MNIPLRIGGCASGPGCGDGEGSVQVATDPLLAIETAKVFAVYGKGGIGKSTTSSNLSAAFSKLGKRVLQIGCDPKHDSTFTLTKRFVPTVIDVLESVNFHAEELRAEDFIFEGYNGVMCVEAGGPPAGAGCGGYVVGQTVKLLKAHHLLEDTDVVIFDVLGDVVCGGFAAPLQFADRTLIVCANDFDSIFAMNRIVAAIASKAKNYKVRLGGVIANRSAELDQIDNYNNRVGLKTMAHFRDLDAIRRSRLKKSVIFEMDPSPEILAVQAEYMHLAETLWAGTEPLDAMPLKDREIFDLLGYD</sequence>
<proteinExistence type="inferred from homology"/>
<gene>
    <name evidence="1" type="primary">bchL</name>
    <name type="ordered locus">Msil_2039</name>
</gene>